<evidence type="ECO:0000255" key="1">
    <source>
        <dbReference type="HAMAP-Rule" id="MF_01852"/>
    </source>
</evidence>
<feature type="chain" id="PRO_0000352910" description="Threonylcarbamoyl-AMP synthase">
    <location>
        <begin position="1"/>
        <end position="190"/>
    </location>
</feature>
<feature type="domain" description="YrdC-like" evidence="1">
    <location>
        <begin position="7"/>
        <end position="190"/>
    </location>
</feature>
<name>TSAC_CROS8</name>
<keyword id="KW-0067">ATP-binding</keyword>
<keyword id="KW-0963">Cytoplasm</keyword>
<keyword id="KW-0547">Nucleotide-binding</keyword>
<keyword id="KW-0548">Nucleotidyltransferase</keyword>
<keyword id="KW-1185">Reference proteome</keyword>
<keyword id="KW-0808">Transferase</keyword>
<keyword id="KW-0819">tRNA processing</keyword>
<dbReference type="EC" id="2.7.7.87" evidence="1"/>
<dbReference type="EMBL" id="CP000783">
    <property type="protein sequence ID" value="ABU75352.1"/>
    <property type="molecule type" value="Genomic_DNA"/>
</dbReference>
<dbReference type="RefSeq" id="WP_012123592.1">
    <property type="nucleotide sequence ID" value="NC_009778.1"/>
</dbReference>
<dbReference type="SMR" id="A7MPF3"/>
<dbReference type="KEGG" id="esa:ESA_00043"/>
<dbReference type="PATRIC" id="fig|290339.8.peg.41"/>
<dbReference type="HOGENOM" id="CLU_031397_6_0_6"/>
<dbReference type="Proteomes" id="UP000000260">
    <property type="component" value="Chromosome"/>
</dbReference>
<dbReference type="GO" id="GO:0005737">
    <property type="term" value="C:cytoplasm"/>
    <property type="evidence" value="ECO:0007669"/>
    <property type="project" value="UniProtKB-SubCell"/>
</dbReference>
<dbReference type="GO" id="GO:0005524">
    <property type="term" value="F:ATP binding"/>
    <property type="evidence" value="ECO:0007669"/>
    <property type="project" value="UniProtKB-UniRule"/>
</dbReference>
<dbReference type="GO" id="GO:0003725">
    <property type="term" value="F:double-stranded RNA binding"/>
    <property type="evidence" value="ECO:0007669"/>
    <property type="project" value="InterPro"/>
</dbReference>
<dbReference type="GO" id="GO:0061710">
    <property type="term" value="F:L-threonylcarbamoyladenylate synthase"/>
    <property type="evidence" value="ECO:0007669"/>
    <property type="project" value="UniProtKB-EC"/>
</dbReference>
<dbReference type="GO" id="GO:0000049">
    <property type="term" value="F:tRNA binding"/>
    <property type="evidence" value="ECO:0007669"/>
    <property type="project" value="TreeGrafter"/>
</dbReference>
<dbReference type="GO" id="GO:0006450">
    <property type="term" value="P:regulation of translational fidelity"/>
    <property type="evidence" value="ECO:0007669"/>
    <property type="project" value="TreeGrafter"/>
</dbReference>
<dbReference type="GO" id="GO:0002949">
    <property type="term" value="P:tRNA threonylcarbamoyladenosine modification"/>
    <property type="evidence" value="ECO:0007669"/>
    <property type="project" value="UniProtKB-UniRule"/>
</dbReference>
<dbReference type="FunFam" id="3.90.870.10:FF:000004">
    <property type="entry name" value="Threonylcarbamoyl-AMP synthase"/>
    <property type="match status" value="1"/>
</dbReference>
<dbReference type="Gene3D" id="3.90.870.10">
    <property type="entry name" value="DHBP synthase"/>
    <property type="match status" value="1"/>
</dbReference>
<dbReference type="HAMAP" id="MF_01852">
    <property type="entry name" value="TsaC"/>
    <property type="match status" value="1"/>
</dbReference>
<dbReference type="InterPro" id="IPR017945">
    <property type="entry name" value="DHBP_synth_RibB-like_a/b_dom"/>
</dbReference>
<dbReference type="InterPro" id="IPR006070">
    <property type="entry name" value="Sua5-like_dom"/>
</dbReference>
<dbReference type="InterPro" id="IPR023535">
    <property type="entry name" value="TC-AMP_synthase"/>
</dbReference>
<dbReference type="InterPro" id="IPR050156">
    <property type="entry name" value="TC-AMP_synthase_SUA5"/>
</dbReference>
<dbReference type="NCBIfam" id="NF007919">
    <property type="entry name" value="PRK10634.1"/>
    <property type="match status" value="1"/>
</dbReference>
<dbReference type="PANTHER" id="PTHR17490">
    <property type="entry name" value="SUA5"/>
    <property type="match status" value="1"/>
</dbReference>
<dbReference type="PANTHER" id="PTHR17490:SF18">
    <property type="entry name" value="THREONYLCARBAMOYL-AMP SYNTHASE"/>
    <property type="match status" value="1"/>
</dbReference>
<dbReference type="Pfam" id="PF01300">
    <property type="entry name" value="Sua5_yciO_yrdC"/>
    <property type="match status" value="1"/>
</dbReference>
<dbReference type="SUPFAM" id="SSF55821">
    <property type="entry name" value="YrdC/RibB"/>
    <property type="match status" value="1"/>
</dbReference>
<dbReference type="PROSITE" id="PS51163">
    <property type="entry name" value="YRDC"/>
    <property type="match status" value="1"/>
</dbReference>
<comment type="function">
    <text evidence="1">Required for the formation of a threonylcarbamoyl group on adenosine at position 37 (t(6)A37) in tRNAs that read codons beginning with adenine. Catalyzes the conversion of L-threonine, HCO(3)(-)/CO(2) and ATP to give threonylcarbamoyl-AMP (TC-AMP) as the acyladenylate intermediate, with the release of diphosphate.</text>
</comment>
<comment type="catalytic activity">
    <reaction evidence="1">
        <text>L-threonine + hydrogencarbonate + ATP = L-threonylcarbamoyladenylate + diphosphate + H2O</text>
        <dbReference type="Rhea" id="RHEA:36407"/>
        <dbReference type="ChEBI" id="CHEBI:15377"/>
        <dbReference type="ChEBI" id="CHEBI:17544"/>
        <dbReference type="ChEBI" id="CHEBI:30616"/>
        <dbReference type="ChEBI" id="CHEBI:33019"/>
        <dbReference type="ChEBI" id="CHEBI:57926"/>
        <dbReference type="ChEBI" id="CHEBI:73682"/>
        <dbReference type="EC" id="2.7.7.87"/>
    </reaction>
</comment>
<comment type="subcellular location">
    <subcellularLocation>
        <location evidence="1">Cytoplasm</location>
    </subcellularLocation>
</comment>
<comment type="similarity">
    <text evidence="1">Belongs to the SUA5 family. TsaC subfamily.</text>
</comment>
<gene>
    <name evidence="1" type="primary">tsaC</name>
    <name type="synonym">rimN</name>
    <name type="ordered locus">ESA_00043</name>
</gene>
<protein>
    <recommendedName>
        <fullName evidence="1">Threonylcarbamoyl-AMP synthase</fullName>
        <shortName evidence="1">TC-AMP synthase</shortName>
        <ecNumber evidence="1">2.7.7.87</ecNumber>
    </recommendedName>
    <alternativeName>
        <fullName evidence="1">L-threonylcarbamoyladenylate synthase</fullName>
    </alternativeName>
    <alternativeName>
        <fullName evidence="1">t(6)A37 threonylcarbamoyladenosine biosynthesis protein TsaC</fullName>
    </alternativeName>
    <alternativeName>
        <fullName evidence="1">tRNA threonylcarbamoyladenosine biosynthesis protein TsaC</fullName>
    </alternativeName>
</protein>
<proteinExistence type="inferred from homology"/>
<reference key="1">
    <citation type="journal article" date="2010" name="PLoS ONE">
        <title>Genome sequence of Cronobacter sakazakii BAA-894 and comparative genomic hybridization analysis with other Cronobacter species.</title>
        <authorList>
            <person name="Kucerova E."/>
            <person name="Clifton S.W."/>
            <person name="Xia X.Q."/>
            <person name="Long F."/>
            <person name="Porwollik S."/>
            <person name="Fulton L."/>
            <person name="Fronick C."/>
            <person name="Minx P."/>
            <person name="Kyung K."/>
            <person name="Warren W."/>
            <person name="Fulton R."/>
            <person name="Feng D."/>
            <person name="Wollam A."/>
            <person name="Shah N."/>
            <person name="Bhonagiri V."/>
            <person name="Nash W.E."/>
            <person name="Hallsworth-Pepin K."/>
            <person name="Wilson R.K."/>
            <person name="McClelland M."/>
            <person name="Forsythe S.J."/>
        </authorList>
    </citation>
    <scope>NUCLEOTIDE SEQUENCE [LARGE SCALE GENOMIC DNA]</scope>
    <source>
        <strain>ATCC BAA-894</strain>
    </source>
</reference>
<sequence>MKNNQPADAISFIVDVLKKEQVIAYPTEAVFGVGCDPDSETAVKRLLELKQRPMEKGLILIAANFDQLKPYIDDAALTAEQREAVFARWPGPVTFVFPAKPSTPRWLTGRFDSLAVRVTNHPQVIALCEAFGKPLVSTSANLSGLEPCRTAQEVLAQFGDDFPVLHGATGGRQNPSEIRDALTGELFRQG</sequence>
<accession>A7MPF3</accession>
<organism>
    <name type="scientific">Cronobacter sakazakii (strain ATCC BAA-894)</name>
    <name type="common">Enterobacter sakazakii</name>
    <dbReference type="NCBI Taxonomy" id="290339"/>
    <lineage>
        <taxon>Bacteria</taxon>
        <taxon>Pseudomonadati</taxon>
        <taxon>Pseudomonadota</taxon>
        <taxon>Gammaproteobacteria</taxon>
        <taxon>Enterobacterales</taxon>
        <taxon>Enterobacteriaceae</taxon>
        <taxon>Cronobacter</taxon>
    </lineage>
</organism>